<gene>
    <name type="primary">eif3B</name>
    <name type="synonym">eif3s9</name>
    <name type="ORF">DDB_G0283597</name>
</gene>
<name>EIF3B_DICDI</name>
<proteinExistence type="inferred from homology"/>
<feature type="chain" id="PRO_0000330324" description="Eukaryotic translation initiation factor 3 subunit B">
    <location>
        <begin position="1"/>
        <end position="670"/>
    </location>
</feature>
<feature type="domain" description="RRM" evidence="1">
    <location>
        <begin position="30"/>
        <end position="116"/>
    </location>
</feature>
<feature type="repeat" description="WD 1">
    <location>
        <begin position="183"/>
        <end position="221"/>
    </location>
</feature>
<feature type="repeat" description="WD 2">
    <location>
        <begin position="222"/>
        <end position="269"/>
    </location>
</feature>
<feature type="repeat" description="WD 3">
    <location>
        <begin position="466"/>
        <end position="507"/>
    </location>
</feature>
<feature type="repeat" description="WD 4">
    <location>
        <begin position="509"/>
        <end position="553"/>
    </location>
</feature>
<feature type="coiled-coil region" evidence="1">
    <location>
        <begin position="568"/>
        <end position="600"/>
    </location>
</feature>
<sequence>MTIFDSDEEELVTTLSDFEPPVQIDTSFNKFIVVDNIPVAPEAKHEKLKSILVKIYQNRPGAEVVGIHLALDAQRNTKGFAFIEYSKKESAIDAATSLNNYPLDKSHTLKVNLLDDFSKFANFEETYKPPTREDFKPKPNYNQWLSDPKALKGYDQFVTRYGDYTDICWNEMHVGKPMVEKSSVSLTSSYVQWSNTGSYLVTFHPDGIALYGGKDWIQVNLFEHRGVQLVDFSPEDKYLITFAPIASDNPNSPKSIVVWDVRSGKKLRSFLAPPKEQFTWPAFQWSAKDKYIARIEQLEKGINIYETPSMNLLDDKIFEVKGIKDFSWSPTDLSLAYFVPANDPLPAKICLVEMPSKKLLAEKSIWGATDARFHWQNEGAYLCVKTDKVATGKTKKEKIPTTSFELFRTHEPNVPIESFEIQYAIKAFSWEPRGKRICIIHGEFKMNMFVSFFEVQKTSVKLISKLENRKLNTIFWSPRGTLVLLANLGDTGELEFYNTQDCESYGTQEHLQCTGVDWNPSGRYVTTFVSHWKVQTDTGFNIWSFNGDLVYSVLKDRFFQFNWRPRPKFMLTNKEINQIKQNIKKYQEKFDKQDEDDNKAIQHIEQTRLDNLMKEFLSFLQKGEQEYQALEPTRKQLGSYEDIDPNDIYESIETIEELIDIKTIVLKKIN</sequence>
<comment type="function">
    <text evidence="1">RNA-binding component of the eukaryotic translation initiation factor 3 (eIF-3) complex, which is involved in protein synthesis of a specialized repertoire of mRNAs and, together with other initiation factors, stimulates binding of mRNA and methionyl-tRNAi to the 40S ribosome. The eIF-3 complex specifically targets and initiates translation of a subset of mRNAs involved in cell proliferation.</text>
</comment>
<comment type="subunit">
    <text evidence="1">Component of the eukaryotic translation initiation factor 3 (eIF-3) complex.</text>
</comment>
<comment type="subcellular location">
    <subcellularLocation>
        <location evidence="1">Cytoplasm</location>
    </subcellularLocation>
</comment>
<comment type="similarity">
    <text evidence="1">Belongs to the eIF-3 subunit B family.</text>
</comment>
<protein>
    <recommendedName>
        <fullName evidence="1">Eukaryotic translation initiation factor 3 subunit B</fullName>
        <shortName evidence="1">eIF3b</shortName>
    </recommendedName>
    <alternativeName>
        <fullName evidence="1">Eukaryotic translation initiation factor 3 subunit 9</fullName>
    </alternativeName>
</protein>
<dbReference type="EMBL" id="AAFI02000055">
    <property type="protein sequence ID" value="EAL65676.2"/>
    <property type="molecule type" value="Genomic_DNA"/>
</dbReference>
<dbReference type="RefSeq" id="XP_639023.2">
    <property type="nucleotide sequence ID" value="XM_633931.2"/>
</dbReference>
<dbReference type="SMR" id="Q54QW1"/>
<dbReference type="FunCoup" id="Q54QW1">
    <property type="interactions" value="1216"/>
</dbReference>
<dbReference type="STRING" id="44689.Q54QW1"/>
<dbReference type="PaxDb" id="44689-DDB0233929"/>
<dbReference type="EnsemblProtists" id="EAL65676">
    <property type="protein sequence ID" value="EAL65676"/>
    <property type="gene ID" value="DDB_G0283597"/>
</dbReference>
<dbReference type="GeneID" id="8624151"/>
<dbReference type="KEGG" id="ddi:DDB_G0283597"/>
<dbReference type="dictyBase" id="DDB_G0283597">
    <property type="gene designation" value="eif3B"/>
</dbReference>
<dbReference type="VEuPathDB" id="AmoebaDB:DDB_G0283597"/>
<dbReference type="eggNOG" id="KOG2314">
    <property type="taxonomic scope" value="Eukaryota"/>
</dbReference>
<dbReference type="HOGENOM" id="CLU_011152_2_0_1"/>
<dbReference type="InParanoid" id="Q54QW1"/>
<dbReference type="OMA" id="LWGGPQF"/>
<dbReference type="PhylomeDB" id="Q54QW1"/>
<dbReference type="Reactome" id="R-DDI-156827">
    <property type="pathway name" value="L13a-mediated translational silencing of Ceruloplasmin expression"/>
</dbReference>
<dbReference type="Reactome" id="R-DDI-72689">
    <property type="pathway name" value="Formation of a pool of free 40S subunits"/>
</dbReference>
<dbReference type="Reactome" id="R-DDI-72695">
    <property type="pathway name" value="Formation of the ternary complex, and subsequently, the 43S complex"/>
</dbReference>
<dbReference type="Reactome" id="R-DDI-72702">
    <property type="pathway name" value="Ribosomal scanning and start codon recognition"/>
</dbReference>
<dbReference type="PRO" id="PR:Q54QW1"/>
<dbReference type="Proteomes" id="UP000002195">
    <property type="component" value="Chromosome 4"/>
</dbReference>
<dbReference type="GO" id="GO:0016282">
    <property type="term" value="C:eukaryotic 43S preinitiation complex"/>
    <property type="evidence" value="ECO:0007669"/>
    <property type="project" value="UniProtKB-UniRule"/>
</dbReference>
<dbReference type="GO" id="GO:0033290">
    <property type="term" value="C:eukaryotic 48S preinitiation complex"/>
    <property type="evidence" value="ECO:0007669"/>
    <property type="project" value="UniProtKB-UniRule"/>
</dbReference>
<dbReference type="GO" id="GO:0005852">
    <property type="term" value="C:eukaryotic translation initiation factor 3 complex"/>
    <property type="evidence" value="ECO:0000250"/>
    <property type="project" value="UniProtKB"/>
</dbReference>
<dbReference type="GO" id="GO:0003723">
    <property type="term" value="F:RNA binding"/>
    <property type="evidence" value="ECO:0007669"/>
    <property type="project" value="UniProtKB-UniRule"/>
</dbReference>
<dbReference type="GO" id="GO:0003743">
    <property type="term" value="F:translation initiation factor activity"/>
    <property type="evidence" value="ECO:0000250"/>
    <property type="project" value="UniProtKB"/>
</dbReference>
<dbReference type="GO" id="GO:0031369">
    <property type="term" value="F:translation initiation factor binding"/>
    <property type="evidence" value="ECO:0007669"/>
    <property type="project" value="InterPro"/>
</dbReference>
<dbReference type="GO" id="GO:0001732">
    <property type="term" value="P:formation of cytoplasmic translation initiation complex"/>
    <property type="evidence" value="ECO:0007669"/>
    <property type="project" value="UniProtKB-UniRule"/>
</dbReference>
<dbReference type="GO" id="GO:0006446">
    <property type="term" value="P:regulation of translational initiation"/>
    <property type="evidence" value="ECO:0000250"/>
    <property type="project" value="UniProtKB"/>
</dbReference>
<dbReference type="GO" id="GO:0006413">
    <property type="term" value="P:translational initiation"/>
    <property type="evidence" value="ECO:0000250"/>
    <property type="project" value="dictyBase"/>
</dbReference>
<dbReference type="CDD" id="cd12278">
    <property type="entry name" value="RRM_eIF3B"/>
    <property type="match status" value="1"/>
</dbReference>
<dbReference type="FunFam" id="2.130.10.10:FF:003373">
    <property type="entry name" value="Eukaryotic translation initiation factor 3 subunit B"/>
    <property type="match status" value="1"/>
</dbReference>
<dbReference type="Gene3D" id="3.30.70.330">
    <property type="match status" value="1"/>
</dbReference>
<dbReference type="Gene3D" id="2.130.10.10">
    <property type="entry name" value="YVTN repeat-like/Quinoprotein amine dehydrogenase"/>
    <property type="match status" value="1"/>
</dbReference>
<dbReference type="HAMAP" id="MF_03001">
    <property type="entry name" value="eIF3b"/>
    <property type="match status" value="1"/>
</dbReference>
<dbReference type="InterPro" id="IPR011400">
    <property type="entry name" value="EIF3B"/>
</dbReference>
<dbReference type="InterPro" id="IPR034363">
    <property type="entry name" value="eIF3B_RRM"/>
</dbReference>
<dbReference type="InterPro" id="IPR012677">
    <property type="entry name" value="Nucleotide-bd_a/b_plait_sf"/>
</dbReference>
<dbReference type="InterPro" id="IPR035979">
    <property type="entry name" value="RBD_domain_sf"/>
</dbReference>
<dbReference type="InterPro" id="IPR000504">
    <property type="entry name" value="RRM_dom"/>
</dbReference>
<dbReference type="InterPro" id="IPR013979">
    <property type="entry name" value="TIF_beta_prop-like"/>
</dbReference>
<dbReference type="InterPro" id="IPR015943">
    <property type="entry name" value="WD40/YVTN_repeat-like_dom_sf"/>
</dbReference>
<dbReference type="PANTHER" id="PTHR14068">
    <property type="entry name" value="EUKARYOTIC TRANSLATION INITIATION FACTOR 3 EIF3 -RELATED"/>
    <property type="match status" value="1"/>
</dbReference>
<dbReference type="PANTHER" id="PTHR14068:SF0">
    <property type="entry name" value="EUKARYOTIC TRANSLATION INITIATION FACTOR 3 SUBUNIT B"/>
    <property type="match status" value="1"/>
</dbReference>
<dbReference type="Pfam" id="PF08662">
    <property type="entry name" value="eIF2A"/>
    <property type="match status" value="1"/>
</dbReference>
<dbReference type="Pfam" id="PF00076">
    <property type="entry name" value="RRM_1"/>
    <property type="match status" value="1"/>
</dbReference>
<dbReference type="PIRSF" id="PIRSF036424">
    <property type="entry name" value="eIF3b"/>
    <property type="match status" value="1"/>
</dbReference>
<dbReference type="SMART" id="SM00360">
    <property type="entry name" value="RRM"/>
    <property type="match status" value="1"/>
</dbReference>
<dbReference type="SUPFAM" id="SSF54928">
    <property type="entry name" value="RNA-binding domain, RBD"/>
    <property type="match status" value="1"/>
</dbReference>
<dbReference type="SUPFAM" id="SSF69322">
    <property type="entry name" value="Tricorn protease domain 2"/>
    <property type="match status" value="1"/>
</dbReference>
<dbReference type="PROSITE" id="PS50102">
    <property type="entry name" value="RRM"/>
    <property type="match status" value="1"/>
</dbReference>
<organism>
    <name type="scientific">Dictyostelium discoideum</name>
    <name type="common">Social amoeba</name>
    <dbReference type="NCBI Taxonomy" id="44689"/>
    <lineage>
        <taxon>Eukaryota</taxon>
        <taxon>Amoebozoa</taxon>
        <taxon>Evosea</taxon>
        <taxon>Eumycetozoa</taxon>
        <taxon>Dictyostelia</taxon>
        <taxon>Dictyosteliales</taxon>
        <taxon>Dictyosteliaceae</taxon>
        <taxon>Dictyostelium</taxon>
    </lineage>
</organism>
<evidence type="ECO:0000255" key="1">
    <source>
        <dbReference type="HAMAP-Rule" id="MF_03001"/>
    </source>
</evidence>
<reference key="1">
    <citation type="journal article" date="2005" name="Nature">
        <title>The genome of the social amoeba Dictyostelium discoideum.</title>
        <authorList>
            <person name="Eichinger L."/>
            <person name="Pachebat J.A."/>
            <person name="Gloeckner G."/>
            <person name="Rajandream M.A."/>
            <person name="Sucgang R."/>
            <person name="Berriman M."/>
            <person name="Song J."/>
            <person name="Olsen R."/>
            <person name="Szafranski K."/>
            <person name="Xu Q."/>
            <person name="Tunggal B."/>
            <person name="Kummerfeld S."/>
            <person name="Madera M."/>
            <person name="Konfortov B.A."/>
            <person name="Rivero F."/>
            <person name="Bankier A.T."/>
            <person name="Lehmann R."/>
            <person name="Hamlin N."/>
            <person name="Davies R."/>
            <person name="Gaudet P."/>
            <person name="Fey P."/>
            <person name="Pilcher K."/>
            <person name="Chen G."/>
            <person name="Saunders D."/>
            <person name="Sodergren E.J."/>
            <person name="Davis P."/>
            <person name="Kerhornou A."/>
            <person name="Nie X."/>
            <person name="Hall N."/>
            <person name="Anjard C."/>
            <person name="Hemphill L."/>
            <person name="Bason N."/>
            <person name="Farbrother P."/>
            <person name="Desany B."/>
            <person name="Just E."/>
            <person name="Morio T."/>
            <person name="Rost R."/>
            <person name="Churcher C.M."/>
            <person name="Cooper J."/>
            <person name="Haydock S."/>
            <person name="van Driessche N."/>
            <person name="Cronin A."/>
            <person name="Goodhead I."/>
            <person name="Muzny D.M."/>
            <person name="Mourier T."/>
            <person name="Pain A."/>
            <person name="Lu M."/>
            <person name="Harper D."/>
            <person name="Lindsay R."/>
            <person name="Hauser H."/>
            <person name="James K.D."/>
            <person name="Quiles M."/>
            <person name="Madan Babu M."/>
            <person name="Saito T."/>
            <person name="Buchrieser C."/>
            <person name="Wardroper A."/>
            <person name="Felder M."/>
            <person name="Thangavelu M."/>
            <person name="Johnson D."/>
            <person name="Knights A."/>
            <person name="Loulseged H."/>
            <person name="Mungall K.L."/>
            <person name="Oliver K."/>
            <person name="Price C."/>
            <person name="Quail M.A."/>
            <person name="Urushihara H."/>
            <person name="Hernandez J."/>
            <person name="Rabbinowitsch E."/>
            <person name="Steffen D."/>
            <person name="Sanders M."/>
            <person name="Ma J."/>
            <person name="Kohara Y."/>
            <person name="Sharp S."/>
            <person name="Simmonds M.N."/>
            <person name="Spiegler S."/>
            <person name="Tivey A."/>
            <person name="Sugano S."/>
            <person name="White B."/>
            <person name="Walker D."/>
            <person name="Woodward J.R."/>
            <person name="Winckler T."/>
            <person name="Tanaka Y."/>
            <person name="Shaulsky G."/>
            <person name="Schleicher M."/>
            <person name="Weinstock G.M."/>
            <person name="Rosenthal A."/>
            <person name="Cox E.C."/>
            <person name="Chisholm R.L."/>
            <person name="Gibbs R.A."/>
            <person name="Loomis W.F."/>
            <person name="Platzer M."/>
            <person name="Kay R.R."/>
            <person name="Williams J.G."/>
            <person name="Dear P.H."/>
            <person name="Noegel A.A."/>
            <person name="Barrell B.G."/>
            <person name="Kuspa A."/>
        </authorList>
    </citation>
    <scope>NUCLEOTIDE SEQUENCE [LARGE SCALE GENOMIC DNA]</scope>
    <source>
        <strain>AX4</strain>
    </source>
</reference>
<keyword id="KW-0175">Coiled coil</keyword>
<keyword id="KW-0963">Cytoplasm</keyword>
<keyword id="KW-0396">Initiation factor</keyword>
<keyword id="KW-0648">Protein biosynthesis</keyword>
<keyword id="KW-1185">Reference proteome</keyword>
<keyword id="KW-0677">Repeat</keyword>
<keyword id="KW-0694">RNA-binding</keyword>
<keyword id="KW-0853">WD repeat</keyword>
<accession>Q54QW1</accession>